<proteinExistence type="inferred from homology"/>
<feature type="chain" id="PRO_1000000812" description="Adenylosuccinate synthetase">
    <location>
        <begin position="1"/>
        <end position="428"/>
    </location>
</feature>
<feature type="active site" description="Proton acceptor" evidence="1">
    <location>
        <position position="14"/>
    </location>
</feature>
<feature type="active site" description="Proton donor" evidence="1">
    <location>
        <position position="42"/>
    </location>
</feature>
<feature type="binding site" evidence="1">
    <location>
        <begin position="13"/>
        <end position="19"/>
    </location>
    <ligand>
        <name>GTP</name>
        <dbReference type="ChEBI" id="CHEBI:37565"/>
    </ligand>
</feature>
<feature type="binding site" description="in other chain" evidence="1">
    <location>
        <begin position="14"/>
        <end position="17"/>
    </location>
    <ligand>
        <name>IMP</name>
        <dbReference type="ChEBI" id="CHEBI:58053"/>
        <note>ligand shared between dimeric partners</note>
    </ligand>
</feature>
<feature type="binding site" evidence="1">
    <location>
        <position position="14"/>
    </location>
    <ligand>
        <name>Mg(2+)</name>
        <dbReference type="ChEBI" id="CHEBI:18420"/>
    </ligand>
</feature>
<feature type="binding site" description="in other chain" evidence="1">
    <location>
        <begin position="39"/>
        <end position="42"/>
    </location>
    <ligand>
        <name>IMP</name>
        <dbReference type="ChEBI" id="CHEBI:58053"/>
        <note>ligand shared between dimeric partners</note>
    </ligand>
</feature>
<feature type="binding site" evidence="1">
    <location>
        <begin position="41"/>
        <end position="43"/>
    </location>
    <ligand>
        <name>GTP</name>
        <dbReference type="ChEBI" id="CHEBI:37565"/>
    </ligand>
</feature>
<feature type="binding site" evidence="1">
    <location>
        <position position="41"/>
    </location>
    <ligand>
        <name>Mg(2+)</name>
        <dbReference type="ChEBI" id="CHEBI:18420"/>
    </ligand>
</feature>
<feature type="binding site" description="in other chain" evidence="1">
    <location>
        <position position="130"/>
    </location>
    <ligand>
        <name>IMP</name>
        <dbReference type="ChEBI" id="CHEBI:58053"/>
        <note>ligand shared between dimeric partners</note>
    </ligand>
</feature>
<feature type="binding site" evidence="1">
    <location>
        <position position="144"/>
    </location>
    <ligand>
        <name>IMP</name>
        <dbReference type="ChEBI" id="CHEBI:58053"/>
        <note>ligand shared between dimeric partners</note>
    </ligand>
</feature>
<feature type="binding site" description="in other chain" evidence="1">
    <location>
        <position position="223"/>
    </location>
    <ligand>
        <name>IMP</name>
        <dbReference type="ChEBI" id="CHEBI:58053"/>
        <note>ligand shared between dimeric partners</note>
    </ligand>
</feature>
<feature type="binding site" description="in other chain" evidence="1">
    <location>
        <position position="238"/>
    </location>
    <ligand>
        <name>IMP</name>
        <dbReference type="ChEBI" id="CHEBI:58053"/>
        <note>ligand shared between dimeric partners</note>
    </ligand>
</feature>
<feature type="binding site" evidence="1">
    <location>
        <begin position="298"/>
        <end position="304"/>
    </location>
    <ligand>
        <name>substrate</name>
    </ligand>
</feature>
<feature type="binding site" description="in other chain" evidence="1">
    <location>
        <position position="302"/>
    </location>
    <ligand>
        <name>IMP</name>
        <dbReference type="ChEBI" id="CHEBI:58053"/>
        <note>ligand shared between dimeric partners</note>
    </ligand>
</feature>
<feature type="binding site" evidence="1">
    <location>
        <position position="304"/>
    </location>
    <ligand>
        <name>GTP</name>
        <dbReference type="ChEBI" id="CHEBI:37565"/>
    </ligand>
</feature>
<feature type="binding site" evidence="1">
    <location>
        <begin position="330"/>
        <end position="332"/>
    </location>
    <ligand>
        <name>GTP</name>
        <dbReference type="ChEBI" id="CHEBI:37565"/>
    </ligand>
</feature>
<feature type="binding site" evidence="1">
    <location>
        <begin position="412"/>
        <end position="414"/>
    </location>
    <ligand>
        <name>GTP</name>
        <dbReference type="ChEBI" id="CHEBI:37565"/>
    </ligand>
</feature>
<evidence type="ECO:0000255" key="1">
    <source>
        <dbReference type="HAMAP-Rule" id="MF_00011"/>
    </source>
</evidence>
<protein>
    <recommendedName>
        <fullName evidence="1">Adenylosuccinate synthetase</fullName>
        <shortName evidence="1">AMPSase</shortName>
        <shortName evidence="1">AdSS</shortName>
        <ecNumber evidence="1">6.3.4.4</ecNumber>
    </recommendedName>
    <alternativeName>
        <fullName evidence="1">IMP--aspartate ligase</fullName>
    </alternativeName>
</protein>
<reference key="1">
    <citation type="journal article" date="2007" name="Nat. Biotechnol.">
        <title>Genome sequence and identification of candidate vaccine antigens from the animal pathogen Dichelobacter nodosus.</title>
        <authorList>
            <person name="Myers G.S.A."/>
            <person name="Parker D."/>
            <person name="Al-Hasani K."/>
            <person name="Kennan R.M."/>
            <person name="Seemann T."/>
            <person name="Ren Q."/>
            <person name="Badger J.H."/>
            <person name="Selengut J.D."/>
            <person name="Deboy R.T."/>
            <person name="Tettelin H."/>
            <person name="Boyce J.D."/>
            <person name="McCarl V.P."/>
            <person name="Han X."/>
            <person name="Nelson W.C."/>
            <person name="Madupu R."/>
            <person name="Mohamoud Y."/>
            <person name="Holley T."/>
            <person name="Fedorova N."/>
            <person name="Khouri H."/>
            <person name="Bottomley S.P."/>
            <person name="Whittington R.J."/>
            <person name="Adler B."/>
            <person name="Songer J.G."/>
            <person name="Rood J.I."/>
            <person name="Paulsen I.T."/>
        </authorList>
    </citation>
    <scope>NUCLEOTIDE SEQUENCE [LARGE SCALE GENOMIC DNA]</scope>
    <source>
        <strain>VCS1703A</strain>
    </source>
</reference>
<keyword id="KW-0963">Cytoplasm</keyword>
<keyword id="KW-0342">GTP-binding</keyword>
<keyword id="KW-0436">Ligase</keyword>
<keyword id="KW-0460">Magnesium</keyword>
<keyword id="KW-0479">Metal-binding</keyword>
<keyword id="KW-0547">Nucleotide-binding</keyword>
<keyword id="KW-0658">Purine biosynthesis</keyword>
<keyword id="KW-1185">Reference proteome</keyword>
<dbReference type="EC" id="6.3.4.4" evidence="1"/>
<dbReference type="EMBL" id="CP000513">
    <property type="protein sequence ID" value="ABQ13157.1"/>
    <property type="molecule type" value="Genomic_DNA"/>
</dbReference>
<dbReference type="RefSeq" id="WP_012030934.1">
    <property type="nucleotide sequence ID" value="NC_009446.1"/>
</dbReference>
<dbReference type="SMR" id="A5EVE1"/>
<dbReference type="STRING" id="246195.DNO_0600"/>
<dbReference type="KEGG" id="dno:DNO_0600"/>
<dbReference type="eggNOG" id="COG0104">
    <property type="taxonomic scope" value="Bacteria"/>
</dbReference>
<dbReference type="HOGENOM" id="CLU_029848_0_0_6"/>
<dbReference type="OrthoDB" id="9807553at2"/>
<dbReference type="UniPathway" id="UPA00075">
    <property type="reaction ID" value="UER00335"/>
</dbReference>
<dbReference type="Proteomes" id="UP000000248">
    <property type="component" value="Chromosome"/>
</dbReference>
<dbReference type="GO" id="GO:0005737">
    <property type="term" value="C:cytoplasm"/>
    <property type="evidence" value="ECO:0007669"/>
    <property type="project" value="UniProtKB-SubCell"/>
</dbReference>
<dbReference type="GO" id="GO:0004019">
    <property type="term" value="F:adenylosuccinate synthase activity"/>
    <property type="evidence" value="ECO:0007669"/>
    <property type="project" value="UniProtKB-UniRule"/>
</dbReference>
<dbReference type="GO" id="GO:0005525">
    <property type="term" value="F:GTP binding"/>
    <property type="evidence" value="ECO:0007669"/>
    <property type="project" value="UniProtKB-UniRule"/>
</dbReference>
<dbReference type="GO" id="GO:0000287">
    <property type="term" value="F:magnesium ion binding"/>
    <property type="evidence" value="ECO:0007669"/>
    <property type="project" value="UniProtKB-UniRule"/>
</dbReference>
<dbReference type="GO" id="GO:0044208">
    <property type="term" value="P:'de novo' AMP biosynthetic process"/>
    <property type="evidence" value="ECO:0007669"/>
    <property type="project" value="UniProtKB-UniRule"/>
</dbReference>
<dbReference type="GO" id="GO:0046040">
    <property type="term" value="P:IMP metabolic process"/>
    <property type="evidence" value="ECO:0007669"/>
    <property type="project" value="TreeGrafter"/>
</dbReference>
<dbReference type="CDD" id="cd03108">
    <property type="entry name" value="AdSS"/>
    <property type="match status" value="1"/>
</dbReference>
<dbReference type="FunFam" id="1.10.300.10:FF:000001">
    <property type="entry name" value="Adenylosuccinate synthetase"/>
    <property type="match status" value="1"/>
</dbReference>
<dbReference type="FunFam" id="3.90.170.10:FF:000001">
    <property type="entry name" value="Adenylosuccinate synthetase"/>
    <property type="match status" value="1"/>
</dbReference>
<dbReference type="Gene3D" id="3.40.440.10">
    <property type="entry name" value="Adenylosuccinate Synthetase, subunit A, domain 1"/>
    <property type="match status" value="1"/>
</dbReference>
<dbReference type="Gene3D" id="1.10.300.10">
    <property type="entry name" value="Adenylosuccinate Synthetase, subunit A, domain 2"/>
    <property type="match status" value="1"/>
</dbReference>
<dbReference type="Gene3D" id="3.90.170.10">
    <property type="entry name" value="Adenylosuccinate Synthetase, subunit A, domain 3"/>
    <property type="match status" value="1"/>
</dbReference>
<dbReference type="HAMAP" id="MF_00011">
    <property type="entry name" value="Adenylosucc_synth"/>
    <property type="match status" value="1"/>
</dbReference>
<dbReference type="InterPro" id="IPR018220">
    <property type="entry name" value="Adenylosuccin_syn_GTP-bd"/>
</dbReference>
<dbReference type="InterPro" id="IPR033128">
    <property type="entry name" value="Adenylosuccin_syn_Lys_AS"/>
</dbReference>
<dbReference type="InterPro" id="IPR042109">
    <property type="entry name" value="Adenylosuccinate_synth_dom1"/>
</dbReference>
<dbReference type="InterPro" id="IPR042110">
    <property type="entry name" value="Adenylosuccinate_synth_dom2"/>
</dbReference>
<dbReference type="InterPro" id="IPR042111">
    <property type="entry name" value="Adenylosuccinate_synth_dom3"/>
</dbReference>
<dbReference type="InterPro" id="IPR001114">
    <property type="entry name" value="Adenylosuccinate_synthetase"/>
</dbReference>
<dbReference type="InterPro" id="IPR027417">
    <property type="entry name" value="P-loop_NTPase"/>
</dbReference>
<dbReference type="NCBIfam" id="NF002223">
    <property type="entry name" value="PRK01117.1"/>
    <property type="match status" value="1"/>
</dbReference>
<dbReference type="NCBIfam" id="TIGR00184">
    <property type="entry name" value="purA"/>
    <property type="match status" value="1"/>
</dbReference>
<dbReference type="PANTHER" id="PTHR11846">
    <property type="entry name" value="ADENYLOSUCCINATE SYNTHETASE"/>
    <property type="match status" value="1"/>
</dbReference>
<dbReference type="PANTHER" id="PTHR11846:SF0">
    <property type="entry name" value="ADENYLOSUCCINATE SYNTHETASE"/>
    <property type="match status" value="1"/>
</dbReference>
<dbReference type="Pfam" id="PF00709">
    <property type="entry name" value="Adenylsucc_synt"/>
    <property type="match status" value="1"/>
</dbReference>
<dbReference type="SMART" id="SM00788">
    <property type="entry name" value="Adenylsucc_synt"/>
    <property type="match status" value="1"/>
</dbReference>
<dbReference type="SUPFAM" id="SSF52540">
    <property type="entry name" value="P-loop containing nucleoside triphosphate hydrolases"/>
    <property type="match status" value="1"/>
</dbReference>
<dbReference type="PROSITE" id="PS01266">
    <property type="entry name" value="ADENYLOSUCCIN_SYN_1"/>
    <property type="match status" value="1"/>
</dbReference>
<dbReference type="PROSITE" id="PS00513">
    <property type="entry name" value="ADENYLOSUCCIN_SYN_2"/>
    <property type="match status" value="1"/>
</dbReference>
<name>PURA_DICNV</name>
<accession>A5EVE1</accession>
<organism>
    <name type="scientific">Dichelobacter nodosus (strain VCS1703A)</name>
    <dbReference type="NCBI Taxonomy" id="246195"/>
    <lineage>
        <taxon>Bacteria</taxon>
        <taxon>Pseudomonadati</taxon>
        <taxon>Pseudomonadota</taxon>
        <taxon>Gammaproteobacteria</taxon>
        <taxon>Cardiobacteriales</taxon>
        <taxon>Cardiobacteriaceae</taxon>
        <taxon>Dichelobacter</taxon>
    </lineage>
</organism>
<sequence length="428" mass="46994">MGKKLVVIGAQWGDEGKGKIVDLLTERAGAVVRFQGGHNAGHTLVVHGKKTVLHLIPSGIMHDHVMSYIGNGVVLCLRALFEEIKALTAEGIPVKERLRISPACALILPSHIALDQARETARGKDKIGTTGRGIGPCYEDKIARRGLRLEDLRHPDDFRQKMQALMTYHNFLLENYYHQTAVDIDATIEEWLAYGKDVLPLMEDVTLALQRHQEQNVIFEGAQGAMLDIDQGTYPFVTSSNTAAGSASCGSGVGPHQLDYILAITKAYTTRVGSGPFPSEQINDIGEHLAKVGVEVGASTGRRRRCGWLDLPALRRALLNSSFDGVCLTKLDVLDELDEIKICTAYCHHEQIIDVAPLGSESLAECEPVYETFTGWKTSTFGIKNEAELPQKARDYIAKIEEYLGIPVVIISTGADRSHTIMRQSLLE</sequence>
<gene>
    <name evidence="1" type="primary">purA</name>
    <name type="ordered locus">DNO_0600</name>
</gene>
<comment type="function">
    <text evidence="1">Plays an important role in the de novo pathway of purine nucleotide biosynthesis. Catalyzes the first committed step in the biosynthesis of AMP from IMP.</text>
</comment>
<comment type="catalytic activity">
    <reaction evidence="1">
        <text>IMP + L-aspartate + GTP = N(6)-(1,2-dicarboxyethyl)-AMP + GDP + phosphate + 2 H(+)</text>
        <dbReference type="Rhea" id="RHEA:15753"/>
        <dbReference type="ChEBI" id="CHEBI:15378"/>
        <dbReference type="ChEBI" id="CHEBI:29991"/>
        <dbReference type="ChEBI" id="CHEBI:37565"/>
        <dbReference type="ChEBI" id="CHEBI:43474"/>
        <dbReference type="ChEBI" id="CHEBI:57567"/>
        <dbReference type="ChEBI" id="CHEBI:58053"/>
        <dbReference type="ChEBI" id="CHEBI:58189"/>
        <dbReference type="EC" id="6.3.4.4"/>
    </reaction>
</comment>
<comment type="cofactor">
    <cofactor evidence="1">
        <name>Mg(2+)</name>
        <dbReference type="ChEBI" id="CHEBI:18420"/>
    </cofactor>
    <text evidence="1">Binds 1 Mg(2+) ion per subunit.</text>
</comment>
<comment type="pathway">
    <text evidence="1">Purine metabolism; AMP biosynthesis via de novo pathway; AMP from IMP: step 1/2.</text>
</comment>
<comment type="subunit">
    <text evidence="1">Homodimer.</text>
</comment>
<comment type="subcellular location">
    <subcellularLocation>
        <location evidence="1">Cytoplasm</location>
    </subcellularLocation>
</comment>
<comment type="similarity">
    <text evidence="1">Belongs to the adenylosuccinate synthetase family.</text>
</comment>